<protein>
    <recommendedName>
        <fullName>Multidrug-efflux transporter 2 regulator</fullName>
    </recommendedName>
</protein>
<proteinExistence type="predicted"/>
<accession>P39842</accession>
<organism>
    <name type="scientific">Bacillus subtilis (strain 168)</name>
    <dbReference type="NCBI Taxonomy" id="224308"/>
    <lineage>
        <taxon>Bacteria</taxon>
        <taxon>Bacillati</taxon>
        <taxon>Bacillota</taxon>
        <taxon>Bacilli</taxon>
        <taxon>Bacillales</taxon>
        <taxon>Bacillaceae</taxon>
        <taxon>Bacillus</taxon>
    </lineage>
</organism>
<sequence>MSEDVKKYFTTGEFSKLCRVKKQTLFHYDEIGLFSPEIKKENGYRYYSYHQFETFQVISLFKELGVPLKEIKCLIKGKTPDKILHVLKEKSIEIDKKINELKQLQTILQTKVTLTEQALETDFSSISFEYLNEETFMLSRKTLNLPERKYVAAISELIHEVQQYELDEGYPIGGIFAREQILEKDFYNYSYFYIKVKDGAENINYHVRPKGLYAVGYEIGGNTEEAYRRIIEFIERNGMQIGENAYEEYMLDEMVVDGYENTYAKILLQVKEV</sequence>
<feature type="chain" id="PRO_0000098108" description="Multidrug-efflux transporter 2 regulator">
    <location>
        <begin position="1"/>
        <end position="273"/>
    </location>
</feature>
<feature type="domain" description="HTH merR-type" evidence="1">
    <location>
        <begin position="8"/>
        <end position="77"/>
    </location>
</feature>
<feature type="DNA-binding region" description="H-T-H motif" evidence="1">
    <location>
        <begin position="11"/>
        <end position="30"/>
    </location>
</feature>
<keyword id="KW-0010">Activator</keyword>
<keyword id="KW-0238">DNA-binding</keyword>
<keyword id="KW-1185">Reference proteome</keyword>
<keyword id="KW-0804">Transcription</keyword>
<keyword id="KW-0805">Transcription regulation</keyword>
<dbReference type="EMBL" id="L32599">
    <property type="protein sequence ID" value="AAC36943.1"/>
    <property type="molecule type" value="Genomic_DNA"/>
</dbReference>
<dbReference type="EMBL" id="D84432">
    <property type="protein sequence ID" value="BAA12356.1"/>
    <property type="molecule type" value="Genomic_DNA"/>
</dbReference>
<dbReference type="EMBL" id="AL009126">
    <property type="protein sequence ID" value="CAB14599.1"/>
    <property type="molecule type" value="Genomic_DNA"/>
</dbReference>
<dbReference type="PIR" id="I39791">
    <property type="entry name" value="I39791"/>
</dbReference>
<dbReference type="RefSeq" id="NP_390535.1">
    <property type="nucleotide sequence ID" value="NC_000964.3"/>
</dbReference>
<dbReference type="RefSeq" id="WP_003229881.1">
    <property type="nucleotide sequence ID" value="NZ_OZ025638.1"/>
</dbReference>
<dbReference type="SMR" id="P39842"/>
<dbReference type="FunCoup" id="P39842">
    <property type="interactions" value="6"/>
</dbReference>
<dbReference type="STRING" id="224308.BSU26580"/>
<dbReference type="PaxDb" id="224308-BSU26580"/>
<dbReference type="EnsemblBacteria" id="CAB14599">
    <property type="protein sequence ID" value="CAB14599"/>
    <property type="gene ID" value="BSU_26580"/>
</dbReference>
<dbReference type="GeneID" id="937644"/>
<dbReference type="KEGG" id="bsu:BSU26580"/>
<dbReference type="PATRIC" id="fig|224308.179.peg.2888"/>
<dbReference type="eggNOG" id="COG0789">
    <property type="taxonomic scope" value="Bacteria"/>
</dbReference>
<dbReference type="eggNOG" id="COG4978">
    <property type="taxonomic scope" value="Bacteria"/>
</dbReference>
<dbReference type="InParanoid" id="P39842"/>
<dbReference type="OrthoDB" id="9773308at2"/>
<dbReference type="PhylomeDB" id="P39842"/>
<dbReference type="BioCyc" id="BSUB:BSU26580-MONOMER"/>
<dbReference type="Proteomes" id="UP000001570">
    <property type="component" value="Chromosome"/>
</dbReference>
<dbReference type="GO" id="GO:0003677">
    <property type="term" value="F:DNA binding"/>
    <property type="evidence" value="ECO:0007669"/>
    <property type="project" value="UniProtKB-KW"/>
</dbReference>
<dbReference type="GO" id="GO:0003700">
    <property type="term" value="F:DNA-binding transcription factor activity"/>
    <property type="evidence" value="ECO:0000318"/>
    <property type="project" value="GO_Central"/>
</dbReference>
<dbReference type="GO" id="GO:0006355">
    <property type="term" value="P:regulation of DNA-templated transcription"/>
    <property type="evidence" value="ECO:0000318"/>
    <property type="project" value="GO_Central"/>
</dbReference>
<dbReference type="CDD" id="cd04782">
    <property type="entry name" value="HTH_BltR"/>
    <property type="match status" value="1"/>
</dbReference>
<dbReference type="Gene3D" id="1.10.1660.10">
    <property type="match status" value="1"/>
</dbReference>
<dbReference type="Gene3D" id="3.20.80.10">
    <property type="entry name" value="Regulatory factor, effector binding domain"/>
    <property type="match status" value="1"/>
</dbReference>
<dbReference type="InterPro" id="IPR009061">
    <property type="entry name" value="DNA-bd_dom_put_sf"/>
</dbReference>
<dbReference type="InterPro" id="IPR029442">
    <property type="entry name" value="GyrI-like"/>
</dbReference>
<dbReference type="InterPro" id="IPR000551">
    <property type="entry name" value="MerR-type_HTH_dom"/>
</dbReference>
<dbReference type="InterPro" id="IPR047057">
    <property type="entry name" value="MerR_fam"/>
</dbReference>
<dbReference type="InterPro" id="IPR011256">
    <property type="entry name" value="Reg_factor_effector_dom_sf"/>
</dbReference>
<dbReference type="PANTHER" id="PTHR30204:SF85">
    <property type="entry name" value="MULTIDRUG-EFFLUX TRANSPORTER 2 REGULATOR"/>
    <property type="match status" value="1"/>
</dbReference>
<dbReference type="PANTHER" id="PTHR30204">
    <property type="entry name" value="REDOX-CYCLING DRUG-SENSING TRANSCRIPTIONAL ACTIVATOR SOXR"/>
    <property type="match status" value="1"/>
</dbReference>
<dbReference type="Pfam" id="PF06445">
    <property type="entry name" value="GyrI-like"/>
    <property type="match status" value="1"/>
</dbReference>
<dbReference type="Pfam" id="PF13411">
    <property type="entry name" value="MerR_1"/>
    <property type="match status" value="1"/>
</dbReference>
<dbReference type="SMART" id="SM00422">
    <property type="entry name" value="HTH_MERR"/>
    <property type="match status" value="1"/>
</dbReference>
<dbReference type="SUPFAM" id="SSF55136">
    <property type="entry name" value="Probable bacterial effector-binding domain"/>
    <property type="match status" value="1"/>
</dbReference>
<dbReference type="SUPFAM" id="SSF46955">
    <property type="entry name" value="Putative DNA-binding domain"/>
    <property type="match status" value="1"/>
</dbReference>
<dbReference type="PROSITE" id="PS00552">
    <property type="entry name" value="HTH_MERR_1"/>
    <property type="match status" value="1"/>
</dbReference>
<dbReference type="PROSITE" id="PS50937">
    <property type="entry name" value="HTH_MERR_2"/>
    <property type="match status" value="1"/>
</dbReference>
<evidence type="ECO:0000255" key="1">
    <source>
        <dbReference type="PROSITE-ProRule" id="PRU00254"/>
    </source>
</evidence>
<name>BLTR_BACSU</name>
<reference key="1">
    <citation type="journal article" date="1995" name="J. Bacteriol.">
        <title>Two highly similar multidrug transporters of Bacillus subtilis whose expression is differentially regulated.</title>
        <authorList>
            <person name="Ahmed M."/>
            <person name="Lyass L."/>
            <person name="Markham P.N."/>
            <person name="Taylor S.S."/>
            <person name="Vazquez-Laslop N."/>
            <person name="Neyfakh A.A."/>
        </authorList>
    </citation>
    <scope>NUCLEOTIDE SEQUENCE [GENOMIC DNA]</scope>
    <source>
        <strain>168 / BD170</strain>
    </source>
</reference>
<reference key="2">
    <citation type="journal article" date="1996" name="Microbiology">
        <title>Systematic sequencing of the 283 kb 210 degrees-232 degrees region of the Bacillus subtilis genome containing the skin element and many sporulation genes.</title>
        <authorList>
            <person name="Mizuno M."/>
            <person name="Masuda S."/>
            <person name="Takemaru K."/>
            <person name="Hosono S."/>
            <person name="Sato T."/>
            <person name="Takeuchi M."/>
            <person name="Kobayashi Y."/>
        </authorList>
    </citation>
    <scope>NUCLEOTIDE SEQUENCE [GENOMIC DNA]</scope>
    <source>
        <strain>168 / JH642</strain>
    </source>
</reference>
<reference key="3">
    <citation type="journal article" date="1997" name="Nature">
        <title>The complete genome sequence of the Gram-positive bacterium Bacillus subtilis.</title>
        <authorList>
            <person name="Kunst F."/>
            <person name="Ogasawara N."/>
            <person name="Moszer I."/>
            <person name="Albertini A.M."/>
            <person name="Alloni G."/>
            <person name="Azevedo V."/>
            <person name="Bertero M.G."/>
            <person name="Bessieres P."/>
            <person name="Bolotin A."/>
            <person name="Borchert S."/>
            <person name="Borriss R."/>
            <person name="Boursier L."/>
            <person name="Brans A."/>
            <person name="Braun M."/>
            <person name="Brignell S.C."/>
            <person name="Bron S."/>
            <person name="Brouillet S."/>
            <person name="Bruschi C.V."/>
            <person name="Caldwell B."/>
            <person name="Capuano V."/>
            <person name="Carter N.M."/>
            <person name="Choi S.-K."/>
            <person name="Codani J.-J."/>
            <person name="Connerton I.F."/>
            <person name="Cummings N.J."/>
            <person name="Daniel R.A."/>
            <person name="Denizot F."/>
            <person name="Devine K.M."/>
            <person name="Duesterhoeft A."/>
            <person name="Ehrlich S.D."/>
            <person name="Emmerson P.T."/>
            <person name="Entian K.-D."/>
            <person name="Errington J."/>
            <person name="Fabret C."/>
            <person name="Ferrari E."/>
            <person name="Foulger D."/>
            <person name="Fritz C."/>
            <person name="Fujita M."/>
            <person name="Fujita Y."/>
            <person name="Fuma S."/>
            <person name="Galizzi A."/>
            <person name="Galleron N."/>
            <person name="Ghim S.-Y."/>
            <person name="Glaser P."/>
            <person name="Goffeau A."/>
            <person name="Golightly E.J."/>
            <person name="Grandi G."/>
            <person name="Guiseppi G."/>
            <person name="Guy B.J."/>
            <person name="Haga K."/>
            <person name="Haiech J."/>
            <person name="Harwood C.R."/>
            <person name="Henaut A."/>
            <person name="Hilbert H."/>
            <person name="Holsappel S."/>
            <person name="Hosono S."/>
            <person name="Hullo M.-F."/>
            <person name="Itaya M."/>
            <person name="Jones L.-M."/>
            <person name="Joris B."/>
            <person name="Karamata D."/>
            <person name="Kasahara Y."/>
            <person name="Klaerr-Blanchard M."/>
            <person name="Klein C."/>
            <person name="Kobayashi Y."/>
            <person name="Koetter P."/>
            <person name="Koningstein G."/>
            <person name="Krogh S."/>
            <person name="Kumano M."/>
            <person name="Kurita K."/>
            <person name="Lapidus A."/>
            <person name="Lardinois S."/>
            <person name="Lauber J."/>
            <person name="Lazarevic V."/>
            <person name="Lee S.-M."/>
            <person name="Levine A."/>
            <person name="Liu H."/>
            <person name="Masuda S."/>
            <person name="Mauel C."/>
            <person name="Medigue C."/>
            <person name="Medina N."/>
            <person name="Mellado R.P."/>
            <person name="Mizuno M."/>
            <person name="Moestl D."/>
            <person name="Nakai S."/>
            <person name="Noback M."/>
            <person name="Noone D."/>
            <person name="O'Reilly M."/>
            <person name="Ogawa K."/>
            <person name="Ogiwara A."/>
            <person name="Oudega B."/>
            <person name="Park S.-H."/>
            <person name="Parro V."/>
            <person name="Pohl T.M."/>
            <person name="Portetelle D."/>
            <person name="Porwollik S."/>
            <person name="Prescott A.M."/>
            <person name="Presecan E."/>
            <person name="Pujic P."/>
            <person name="Purnelle B."/>
            <person name="Rapoport G."/>
            <person name="Rey M."/>
            <person name="Reynolds S."/>
            <person name="Rieger M."/>
            <person name="Rivolta C."/>
            <person name="Rocha E."/>
            <person name="Roche B."/>
            <person name="Rose M."/>
            <person name="Sadaie Y."/>
            <person name="Sato T."/>
            <person name="Scanlan E."/>
            <person name="Schleich S."/>
            <person name="Schroeter R."/>
            <person name="Scoffone F."/>
            <person name="Sekiguchi J."/>
            <person name="Sekowska A."/>
            <person name="Seror S.J."/>
            <person name="Serror P."/>
            <person name="Shin B.-S."/>
            <person name="Soldo B."/>
            <person name="Sorokin A."/>
            <person name="Tacconi E."/>
            <person name="Takagi T."/>
            <person name="Takahashi H."/>
            <person name="Takemaru K."/>
            <person name="Takeuchi M."/>
            <person name="Tamakoshi A."/>
            <person name="Tanaka T."/>
            <person name="Terpstra P."/>
            <person name="Tognoni A."/>
            <person name="Tosato V."/>
            <person name="Uchiyama S."/>
            <person name="Vandenbol M."/>
            <person name="Vannier F."/>
            <person name="Vassarotti A."/>
            <person name="Viari A."/>
            <person name="Wambutt R."/>
            <person name="Wedler E."/>
            <person name="Wedler H."/>
            <person name="Weitzenegger T."/>
            <person name="Winters P."/>
            <person name="Wipat A."/>
            <person name="Yamamoto H."/>
            <person name="Yamane K."/>
            <person name="Yasumoto K."/>
            <person name="Yata K."/>
            <person name="Yoshida K."/>
            <person name="Yoshikawa H.-F."/>
            <person name="Zumstein E."/>
            <person name="Yoshikawa H."/>
            <person name="Danchin A."/>
        </authorList>
    </citation>
    <scope>NUCLEOTIDE SEQUENCE [LARGE SCALE GENOMIC DNA]</scope>
    <source>
        <strain>168</strain>
    </source>
</reference>
<comment type="function">
    <text>Activates transcription of the blt gene in response to structurally dissimilar drugs.</text>
</comment>
<gene>
    <name type="primary">bltR</name>
    <name type="synonym">bmr2R</name>
    <name type="synonym">bmtR</name>
    <name type="ordered locus">BSU26580</name>
</gene>